<evidence type="ECO:0000255" key="1">
    <source>
        <dbReference type="HAMAP-Rule" id="MF_00375"/>
    </source>
</evidence>
<sequence>MVVKFTKSEALHKEALEHIVGGVNSPSRSFKAVGGGAPVAMERGKGAYFWDVDGNKYIDYLAAYGPIITGHAHPHITKAITTAAENGVLYGTPTALEVKFAKMLKEAMPALDKVRFVNSGTEAVMTTIRVARAYTGRTKIMKFAGCYHGHSDLVLVAAGSGPSTLGTPDSAGVPQSIAQEVITVPFNNVETLKEALDKWGHEVAAILVEPIVGNFGIVEPKPGFLEKVNELVHEAGALVIYDEVITAFRFMYGGAQDLLGVTPDLTALGKVIGGGLPIGAYGGKKEIMEQVAPLGPAYQAGTMAGNPASMASGIACLEVLQQEGLYEKLDELGAMLEKGILEQAAKHNIDITLNRLKGALTVYFTTNTIEDYDAAQDTDGEMFGKFFKLMLQEGVNLAPSKYEAWFLTTEHTKEDIEYTIEAVGRAFATLADNK</sequence>
<proteinExistence type="inferred from homology"/>
<protein>
    <recommendedName>
        <fullName evidence="1">Glutamate-1-semialdehyde 2,1-aminomutase 1</fullName>
        <shortName evidence="1">GSA 1</shortName>
        <ecNumber evidence="1">5.4.3.8</ecNumber>
    </recommendedName>
    <alternativeName>
        <fullName evidence="1">Glutamate-1-semialdehyde aminotransferase 1</fullName>
        <shortName evidence="1">GSA-AT 1</shortName>
    </alternativeName>
</protein>
<reference key="1">
    <citation type="journal article" date="2007" name="J. Bacteriol.">
        <title>The complete genome sequence of Bacillus thuringiensis Al Hakam.</title>
        <authorList>
            <person name="Challacombe J.F."/>
            <person name="Altherr M.R."/>
            <person name="Xie G."/>
            <person name="Bhotika S.S."/>
            <person name="Brown N."/>
            <person name="Bruce D."/>
            <person name="Campbell C.S."/>
            <person name="Campbell M.L."/>
            <person name="Chen J."/>
            <person name="Chertkov O."/>
            <person name="Cleland C."/>
            <person name="Dimitrijevic M."/>
            <person name="Doggett N.A."/>
            <person name="Fawcett J.J."/>
            <person name="Glavina T."/>
            <person name="Goodwin L.A."/>
            <person name="Green L.D."/>
            <person name="Han C.S."/>
            <person name="Hill K.K."/>
            <person name="Hitchcock P."/>
            <person name="Jackson P.J."/>
            <person name="Keim P."/>
            <person name="Kewalramani A.R."/>
            <person name="Longmire J."/>
            <person name="Lucas S."/>
            <person name="Malfatti S."/>
            <person name="Martinez D."/>
            <person name="McMurry K."/>
            <person name="Meincke L.J."/>
            <person name="Misra M."/>
            <person name="Moseman B.L."/>
            <person name="Mundt M."/>
            <person name="Munk A.C."/>
            <person name="Okinaka R.T."/>
            <person name="Parson-Quintana B."/>
            <person name="Reilly L.P."/>
            <person name="Richardson P."/>
            <person name="Robinson D.L."/>
            <person name="Saunders E."/>
            <person name="Tapia R."/>
            <person name="Tesmer J.G."/>
            <person name="Thayer N."/>
            <person name="Thompson L.S."/>
            <person name="Tice H."/>
            <person name="Ticknor L.O."/>
            <person name="Wills P.L."/>
            <person name="Gilna P."/>
            <person name="Brettin T.S."/>
        </authorList>
    </citation>
    <scope>NUCLEOTIDE SEQUENCE [LARGE SCALE GENOMIC DNA]</scope>
    <source>
        <strain>Al Hakam</strain>
    </source>
</reference>
<feature type="chain" id="PRO_0000382279" description="Glutamate-1-semialdehyde 2,1-aminomutase 1">
    <location>
        <begin position="1"/>
        <end position="434"/>
    </location>
</feature>
<feature type="modified residue" description="N6-(pyridoxal phosphate)lysine" evidence="1">
    <location>
        <position position="270"/>
    </location>
</feature>
<comment type="catalytic activity">
    <reaction evidence="1">
        <text>(S)-4-amino-5-oxopentanoate = 5-aminolevulinate</text>
        <dbReference type="Rhea" id="RHEA:14265"/>
        <dbReference type="ChEBI" id="CHEBI:57501"/>
        <dbReference type="ChEBI" id="CHEBI:356416"/>
        <dbReference type="EC" id="5.4.3.8"/>
    </reaction>
</comment>
<comment type="cofactor">
    <cofactor evidence="1">
        <name>pyridoxal 5'-phosphate</name>
        <dbReference type="ChEBI" id="CHEBI:597326"/>
    </cofactor>
</comment>
<comment type="pathway">
    <text evidence="1">Porphyrin-containing compound metabolism; protoporphyrin-IX biosynthesis; 5-aminolevulinate from L-glutamyl-tRNA(Glu): step 2/2.</text>
</comment>
<comment type="subunit">
    <text evidence="1">Homodimer.</text>
</comment>
<comment type="subcellular location">
    <subcellularLocation>
        <location evidence="1">Cytoplasm</location>
    </subcellularLocation>
</comment>
<comment type="similarity">
    <text evidence="1">Belongs to the class-III pyridoxal-phosphate-dependent aminotransferase family. HemL subfamily.</text>
</comment>
<organism>
    <name type="scientific">Bacillus thuringiensis (strain Al Hakam)</name>
    <dbReference type="NCBI Taxonomy" id="412694"/>
    <lineage>
        <taxon>Bacteria</taxon>
        <taxon>Bacillati</taxon>
        <taxon>Bacillota</taxon>
        <taxon>Bacilli</taxon>
        <taxon>Bacillales</taxon>
        <taxon>Bacillaceae</taxon>
        <taxon>Bacillus</taxon>
        <taxon>Bacillus cereus group</taxon>
    </lineage>
</organism>
<name>GSA1_BACAH</name>
<accession>A0R9G6</accession>
<dbReference type="EC" id="5.4.3.8" evidence="1"/>
<dbReference type="EMBL" id="CP000485">
    <property type="protein sequence ID" value="ABK83859.1"/>
    <property type="molecule type" value="Genomic_DNA"/>
</dbReference>
<dbReference type="SMR" id="A0R9G6"/>
<dbReference type="KEGG" id="btl:BALH_0464"/>
<dbReference type="HOGENOM" id="CLU_016922_1_5_9"/>
<dbReference type="UniPathway" id="UPA00251">
    <property type="reaction ID" value="UER00317"/>
</dbReference>
<dbReference type="GO" id="GO:0005737">
    <property type="term" value="C:cytoplasm"/>
    <property type="evidence" value="ECO:0007669"/>
    <property type="project" value="UniProtKB-SubCell"/>
</dbReference>
<dbReference type="GO" id="GO:0042286">
    <property type="term" value="F:glutamate-1-semialdehyde 2,1-aminomutase activity"/>
    <property type="evidence" value="ECO:0007669"/>
    <property type="project" value="UniProtKB-UniRule"/>
</dbReference>
<dbReference type="GO" id="GO:0030170">
    <property type="term" value="F:pyridoxal phosphate binding"/>
    <property type="evidence" value="ECO:0007669"/>
    <property type="project" value="InterPro"/>
</dbReference>
<dbReference type="GO" id="GO:0008483">
    <property type="term" value="F:transaminase activity"/>
    <property type="evidence" value="ECO:0007669"/>
    <property type="project" value="InterPro"/>
</dbReference>
<dbReference type="GO" id="GO:0006782">
    <property type="term" value="P:protoporphyrinogen IX biosynthetic process"/>
    <property type="evidence" value="ECO:0007669"/>
    <property type="project" value="UniProtKB-UniRule"/>
</dbReference>
<dbReference type="CDD" id="cd00610">
    <property type="entry name" value="OAT_like"/>
    <property type="match status" value="1"/>
</dbReference>
<dbReference type="FunFam" id="3.40.640.10:FF:000021">
    <property type="entry name" value="Glutamate-1-semialdehyde 2,1-aminomutase"/>
    <property type="match status" value="1"/>
</dbReference>
<dbReference type="Gene3D" id="3.90.1150.10">
    <property type="entry name" value="Aspartate Aminotransferase, domain 1"/>
    <property type="match status" value="1"/>
</dbReference>
<dbReference type="Gene3D" id="3.40.640.10">
    <property type="entry name" value="Type I PLP-dependent aspartate aminotransferase-like (Major domain)"/>
    <property type="match status" value="1"/>
</dbReference>
<dbReference type="HAMAP" id="MF_00375">
    <property type="entry name" value="HemL_aminotrans_3"/>
    <property type="match status" value="1"/>
</dbReference>
<dbReference type="InterPro" id="IPR004639">
    <property type="entry name" value="4pyrrol_synth_GluAld_NH2Trfase"/>
</dbReference>
<dbReference type="InterPro" id="IPR005814">
    <property type="entry name" value="Aminotrans_3"/>
</dbReference>
<dbReference type="InterPro" id="IPR049704">
    <property type="entry name" value="Aminotrans_3_PPA_site"/>
</dbReference>
<dbReference type="InterPro" id="IPR015424">
    <property type="entry name" value="PyrdxlP-dep_Trfase"/>
</dbReference>
<dbReference type="InterPro" id="IPR015421">
    <property type="entry name" value="PyrdxlP-dep_Trfase_major"/>
</dbReference>
<dbReference type="InterPro" id="IPR015422">
    <property type="entry name" value="PyrdxlP-dep_Trfase_small"/>
</dbReference>
<dbReference type="NCBIfam" id="TIGR00713">
    <property type="entry name" value="hemL"/>
    <property type="match status" value="1"/>
</dbReference>
<dbReference type="NCBIfam" id="NF000818">
    <property type="entry name" value="PRK00062.1"/>
    <property type="match status" value="1"/>
</dbReference>
<dbReference type="NCBIfam" id="NF009055">
    <property type="entry name" value="PRK12389.1"/>
    <property type="match status" value="1"/>
</dbReference>
<dbReference type="PANTHER" id="PTHR43713">
    <property type="entry name" value="GLUTAMATE-1-SEMIALDEHYDE 2,1-AMINOMUTASE"/>
    <property type="match status" value="1"/>
</dbReference>
<dbReference type="PANTHER" id="PTHR43713:SF1">
    <property type="entry name" value="GLUTAMATE-1-SEMIALDEHYDE 2,1-AMINOMUTASE 2"/>
    <property type="match status" value="1"/>
</dbReference>
<dbReference type="Pfam" id="PF00202">
    <property type="entry name" value="Aminotran_3"/>
    <property type="match status" value="1"/>
</dbReference>
<dbReference type="SUPFAM" id="SSF53383">
    <property type="entry name" value="PLP-dependent transferases"/>
    <property type="match status" value="1"/>
</dbReference>
<dbReference type="PROSITE" id="PS00600">
    <property type="entry name" value="AA_TRANSFER_CLASS_3"/>
    <property type="match status" value="1"/>
</dbReference>
<keyword id="KW-0963">Cytoplasm</keyword>
<keyword id="KW-0413">Isomerase</keyword>
<keyword id="KW-0627">Porphyrin biosynthesis</keyword>
<keyword id="KW-0663">Pyridoxal phosphate</keyword>
<gene>
    <name evidence="1" type="primary">hemL1</name>
    <name type="ordered locus">BALH_0464</name>
</gene>